<evidence type="ECO:0000250" key="1"/>
<evidence type="ECO:0000305" key="2"/>
<accession>O84481</accession>
<organism>
    <name type="scientific">Chlamydia trachomatis serovar D (strain ATCC VR-885 / DSM 19411 / UW-3/Cx)</name>
    <dbReference type="NCBI Taxonomy" id="272561"/>
    <lineage>
        <taxon>Bacteria</taxon>
        <taxon>Pseudomonadati</taxon>
        <taxon>Chlamydiota</taxon>
        <taxon>Chlamydiia</taxon>
        <taxon>Chlamydiales</taxon>
        <taxon>Chlamydiaceae</taxon>
        <taxon>Chlamydia/Chlamydophila group</taxon>
        <taxon>Chlamydia</taxon>
    </lineage>
</organism>
<dbReference type="EC" id="6.1.1.20"/>
<dbReference type="EMBL" id="AE001273">
    <property type="protein sequence ID" value="AAC68075.1"/>
    <property type="molecule type" value="Genomic_DNA"/>
</dbReference>
<dbReference type="PIR" id="H71509">
    <property type="entry name" value="H71509"/>
</dbReference>
<dbReference type="RefSeq" id="NP_219988.1">
    <property type="nucleotide sequence ID" value="NC_000117.1"/>
</dbReference>
<dbReference type="RefSeq" id="WP_010725208.1">
    <property type="nucleotide sequence ID" value="NC_000117.1"/>
</dbReference>
<dbReference type="SMR" id="O84481"/>
<dbReference type="FunCoup" id="O84481">
    <property type="interactions" value="272"/>
</dbReference>
<dbReference type="STRING" id="272561.CT_475"/>
<dbReference type="EnsemblBacteria" id="AAC68075">
    <property type="protein sequence ID" value="AAC68075"/>
    <property type="gene ID" value="CT_475"/>
</dbReference>
<dbReference type="GeneID" id="884251"/>
<dbReference type="KEGG" id="ctr:CT_475"/>
<dbReference type="PATRIC" id="fig|272561.5.peg.514"/>
<dbReference type="HOGENOM" id="CLU_016891_0_0_0"/>
<dbReference type="InParanoid" id="O84481"/>
<dbReference type="OrthoDB" id="9805455at2"/>
<dbReference type="Proteomes" id="UP000000431">
    <property type="component" value="Chromosome"/>
</dbReference>
<dbReference type="GO" id="GO:0009328">
    <property type="term" value="C:phenylalanine-tRNA ligase complex"/>
    <property type="evidence" value="ECO:0000318"/>
    <property type="project" value="GO_Central"/>
</dbReference>
<dbReference type="GO" id="GO:0005524">
    <property type="term" value="F:ATP binding"/>
    <property type="evidence" value="ECO:0007669"/>
    <property type="project" value="UniProtKB-UniRule"/>
</dbReference>
<dbReference type="GO" id="GO:0000287">
    <property type="term" value="F:magnesium ion binding"/>
    <property type="evidence" value="ECO:0007669"/>
    <property type="project" value="UniProtKB-UniRule"/>
</dbReference>
<dbReference type="GO" id="GO:0004826">
    <property type="term" value="F:phenylalanine-tRNA ligase activity"/>
    <property type="evidence" value="ECO:0007669"/>
    <property type="project" value="UniProtKB-UniRule"/>
</dbReference>
<dbReference type="GO" id="GO:0000049">
    <property type="term" value="F:tRNA binding"/>
    <property type="evidence" value="ECO:0007669"/>
    <property type="project" value="UniProtKB-KW"/>
</dbReference>
<dbReference type="GO" id="GO:0006432">
    <property type="term" value="P:phenylalanyl-tRNA aminoacylation"/>
    <property type="evidence" value="ECO:0000318"/>
    <property type="project" value="GO_Central"/>
</dbReference>
<dbReference type="CDD" id="cd00769">
    <property type="entry name" value="PheRS_beta_core"/>
    <property type="match status" value="1"/>
</dbReference>
<dbReference type="CDD" id="cd02796">
    <property type="entry name" value="tRNA_bind_bactPheRS"/>
    <property type="match status" value="1"/>
</dbReference>
<dbReference type="FunFam" id="2.40.50.140:FF:000045">
    <property type="entry name" value="Phenylalanine--tRNA ligase beta subunit"/>
    <property type="match status" value="1"/>
</dbReference>
<dbReference type="Gene3D" id="3.30.56.10">
    <property type="match status" value="2"/>
</dbReference>
<dbReference type="Gene3D" id="3.30.930.10">
    <property type="entry name" value="Bira Bifunctional Protein, Domain 2"/>
    <property type="match status" value="1"/>
</dbReference>
<dbReference type="Gene3D" id="3.30.70.380">
    <property type="entry name" value="Ferrodoxin-fold anticodon-binding domain"/>
    <property type="match status" value="1"/>
</dbReference>
<dbReference type="Gene3D" id="2.40.50.140">
    <property type="entry name" value="Nucleic acid-binding proteins"/>
    <property type="match status" value="1"/>
</dbReference>
<dbReference type="Gene3D" id="3.50.40.10">
    <property type="entry name" value="Phenylalanyl-trna Synthetase, Chain B, domain 3"/>
    <property type="match status" value="1"/>
</dbReference>
<dbReference type="HAMAP" id="MF_00283">
    <property type="entry name" value="Phe_tRNA_synth_beta1"/>
    <property type="match status" value="1"/>
</dbReference>
<dbReference type="InterPro" id="IPR045864">
    <property type="entry name" value="aa-tRNA-synth_II/BPL/LPL"/>
</dbReference>
<dbReference type="InterPro" id="IPR005146">
    <property type="entry name" value="B3/B4_tRNA-bd"/>
</dbReference>
<dbReference type="InterPro" id="IPR009061">
    <property type="entry name" value="DNA-bd_dom_put_sf"/>
</dbReference>
<dbReference type="InterPro" id="IPR005121">
    <property type="entry name" value="Fdx_antiC-bd"/>
</dbReference>
<dbReference type="InterPro" id="IPR036690">
    <property type="entry name" value="Fdx_antiC-bd_sf"/>
</dbReference>
<dbReference type="InterPro" id="IPR012340">
    <property type="entry name" value="NA-bd_OB-fold"/>
</dbReference>
<dbReference type="InterPro" id="IPR045060">
    <property type="entry name" value="Phe-tRNA-ligase_IIc_bsu"/>
</dbReference>
<dbReference type="InterPro" id="IPR004532">
    <property type="entry name" value="Phe-tRNA-ligase_IIc_bsu_bact"/>
</dbReference>
<dbReference type="InterPro" id="IPR020825">
    <property type="entry name" value="Phe-tRNA_synthase-like_B3/B4"/>
</dbReference>
<dbReference type="InterPro" id="IPR041616">
    <property type="entry name" value="PheRS_beta_core"/>
</dbReference>
<dbReference type="InterPro" id="IPR002547">
    <property type="entry name" value="tRNA-bd_dom"/>
</dbReference>
<dbReference type="InterPro" id="IPR033714">
    <property type="entry name" value="tRNA_bind_bactPheRS"/>
</dbReference>
<dbReference type="InterPro" id="IPR005147">
    <property type="entry name" value="tRNA_synthase_B5-dom"/>
</dbReference>
<dbReference type="NCBIfam" id="TIGR00472">
    <property type="entry name" value="pheT_bact"/>
    <property type="match status" value="1"/>
</dbReference>
<dbReference type="PANTHER" id="PTHR10947:SF0">
    <property type="entry name" value="PHENYLALANINE--TRNA LIGASE BETA SUBUNIT"/>
    <property type="match status" value="1"/>
</dbReference>
<dbReference type="PANTHER" id="PTHR10947">
    <property type="entry name" value="PHENYLALANYL-TRNA SYNTHETASE BETA CHAIN AND LEUCINE-RICH REPEAT-CONTAINING PROTEIN 47"/>
    <property type="match status" value="1"/>
</dbReference>
<dbReference type="Pfam" id="PF03483">
    <property type="entry name" value="B3_4"/>
    <property type="match status" value="1"/>
</dbReference>
<dbReference type="Pfam" id="PF03484">
    <property type="entry name" value="B5"/>
    <property type="match status" value="1"/>
</dbReference>
<dbReference type="Pfam" id="PF03147">
    <property type="entry name" value="FDX-ACB"/>
    <property type="match status" value="1"/>
</dbReference>
<dbReference type="Pfam" id="PF01588">
    <property type="entry name" value="tRNA_bind"/>
    <property type="match status" value="1"/>
</dbReference>
<dbReference type="Pfam" id="PF17759">
    <property type="entry name" value="tRNA_synthFbeta"/>
    <property type="match status" value="1"/>
</dbReference>
<dbReference type="SMART" id="SM00873">
    <property type="entry name" value="B3_4"/>
    <property type="match status" value="1"/>
</dbReference>
<dbReference type="SMART" id="SM00874">
    <property type="entry name" value="B5"/>
    <property type="match status" value="1"/>
</dbReference>
<dbReference type="SMART" id="SM00896">
    <property type="entry name" value="FDX-ACB"/>
    <property type="match status" value="1"/>
</dbReference>
<dbReference type="SUPFAM" id="SSF54991">
    <property type="entry name" value="Anticodon-binding domain of PheRS"/>
    <property type="match status" value="1"/>
</dbReference>
<dbReference type="SUPFAM" id="SSF55681">
    <property type="entry name" value="Class II aaRS and biotin synthetases"/>
    <property type="match status" value="1"/>
</dbReference>
<dbReference type="SUPFAM" id="SSF50249">
    <property type="entry name" value="Nucleic acid-binding proteins"/>
    <property type="match status" value="1"/>
</dbReference>
<dbReference type="SUPFAM" id="SSF56037">
    <property type="entry name" value="PheT/TilS domain"/>
    <property type="match status" value="1"/>
</dbReference>
<dbReference type="SUPFAM" id="SSF46955">
    <property type="entry name" value="Putative DNA-binding domain"/>
    <property type="match status" value="1"/>
</dbReference>
<dbReference type="PROSITE" id="PS51483">
    <property type="entry name" value="B5"/>
    <property type="match status" value="1"/>
</dbReference>
<dbReference type="PROSITE" id="PS51447">
    <property type="entry name" value="FDX_ACB"/>
    <property type="match status" value="1"/>
</dbReference>
<dbReference type="PROSITE" id="PS50886">
    <property type="entry name" value="TRBD"/>
    <property type="match status" value="1"/>
</dbReference>
<name>SYFB_CHLTR</name>
<protein>
    <recommendedName>
        <fullName>Phenylalanine--tRNA ligase beta subunit</fullName>
        <ecNumber>6.1.1.20</ecNumber>
    </recommendedName>
    <alternativeName>
        <fullName>Phenylalanyl-tRNA synthetase beta subunit</fullName>
        <shortName>PheRS</shortName>
    </alternativeName>
</protein>
<gene>
    <name type="primary">pheT</name>
    <name type="ordered locus">CT_475</name>
</gene>
<sequence length="790" mass="87095">MLVPLSLLQKFFSSPLSIEEILQACDRIGIEAECSNVFPDSLNTVVTGKILSASPHPDAERLTVAIVFDGKGERQIICGAPNCRAGIIVPIALPGAKLRNASGEITTIKKAKIRGLESQGMCCGADELGFPHLQKAERGIFEFPADTPLGESACMLLAGAPLECSLTPNLGHCASLLGLAREISFLSPVSLNIPEEFSFASLPQETSICDMHDAGACPVFYSVKISGLSCRRSPEYLQAALTALGQKPLNAIVDITNYVMLSLGQPLHAYDSQAVEQKSLHAATLQSAQPLTLLNQETYTLPAGSLVVADQHNILGLAGVMGSAASSCSENTTEIILEAAYFQPQAVRKYQRTIQLHTEAAYRFTRGVDPQGVLPVLHAAIHMIQSLFPDAQISPIQKIGDDSFSPLSLSVRPKTIKRLLDIELSTAEIVAKLSSLGFQTAVEEQAVRVEVPSYRHDIQEETDLVEEICRTTPFVQKTQKILPTYTPIYSLKRELTAFLANGGLQQFFTYSLLDTEVSSLSLQESSLIPVQNSSWKLRDSLLPGMLKSAATNLHRQAPYVYAFEIGNVYSKEQNRYQEEERVAILLSRQVMDDSWQGKTPLSFYTIKGWVEKLLCQSGASIEDFSLQPSQHPNFHPYQQAALYQKKHLLGIFGTLHPQLCRKAQIKHDVVFAELSLNVLLSLKKKSGPHYVPYPIYPASSRDITITIDRDLPADLVRRELLSFESKWLESVHIVSVYQGRDSASQSKNVSLRMVFRDHERTLSGQEIEEEYERLTALLDKKLANIGQGNS</sequence>
<proteinExistence type="inferred from homology"/>
<comment type="catalytic activity">
    <reaction>
        <text>tRNA(Phe) + L-phenylalanine + ATP = L-phenylalanyl-tRNA(Phe) + AMP + diphosphate + H(+)</text>
        <dbReference type="Rhea" id="RHEA:19413"/>
        <dbReference type="Rhea" id="RHEA-COMP:9668"/>
        <dbReference type="Rhea" id="RHEA-COMP:9699"/>
        <dbReference type="ChEBI" id="CHEBI:15378"/>
        <dbReference type="ChEBI" id="CHEBI:30616"/>
        <dbReference type="ChEBI" id="CHEBI:33019"/>
        <dbReference type="ChEBI" id="CHEBI:58095"/>
        <dbReference type="ChEBI" id="CHEBI:78442"/>
        <dbReference type="ChEBI" id="CHEBI:78531"/>
        <dbReference type="ChEBI" id="CHEBI:456215"/>
        <dbReference type="EC" id="6.1.1.20"/>
    </reaction>
</comment>
<comment type="cofactor">
    <cofactor evidence="1">
        <name>Mg(2+)</name>
        <dbReference type="ChEBI" id="CHEBI:18420"/>
    </cofactor>
    <text evidence="1">Binds 2 magnesium ions per tetramer.</text>
</comment>
<comment type="subunit">
    <text evidence="1">Tetramer of two alpha and two beta subunits.</text>
</comment>
<comment type="subcellular location">
    <subcellularLocation>
        <location evidence="1">Cytoplasm</location>
    </subcellularLocation>
</comment>
<comment type="similarity">
    <text evidence="2">Belongs to the phenylalanyl-tRNA synthetase beta subunit family. Type 1 subfamily.</text>
</comment>
<feature type="chain" id="PRO_0000126868" description="Phenylalanine--tRNA ligase beta subunit">
    <location>
        <begin position="1"/>
        <end position="790"/>
    </location>
</feature>
<feature type="domain" description="tRNA-binding">
    <location>
        <begin position="39"/>
        <end position="154"/>
    </location>
</feature>
<feature type="domain" description="B5">
    <location>
        <begin position="404"/>
        <end position="483"/>
    </location>
</feature>
<feature type="domain" description="FDX-ACB">
    <location>
        <begin position="694"/>
        <end position="790"/>
    </location>
</feature>
<feature type="binding site" evidence="1">
    <location>
        <position position="457"/>
    </location>
    <ligand>
        <name>Mg(2+)</name>
        <dbReference type="ChEBI" id="CHEBI:18420"/>
        <note>shared with alpha subunit</note>
    </ligand>
</feature>
<feature type="binding site" evidence="1">
    <location>
        <position position="463"/>
    </location>
    <ligand>
        <name>Mg(2+)</name>
        <dbReference type="ChEBI" id="CHEBI:18420"/>
        <note>shared with alpha subunit</note>
    </ligand>
</feature>
<feature type="binding site" evidence="1">
    <location>
        <position position="466"/>
    </location>
    <ligand>
        <name>Mg(2+)</name>
        <dbReference type="ChEBI" id="CHEBI:18420"/>
        <note>shared with alpha subunit</note>
    </ligand>
</feature>
<feature type="binding site" evidence="1">
    <location>
        <position position="467"/>
    </location>
    <ligand>
        <name>Mg(2+)</name>
        <dbReference type="ChEBI" id="CHEBI:18420"/>
        <note>shared with alpha subunit</note>
    </ligand>
</feature>
<reference key="1">
    <citation type="journal article" date="1998" name="Science">
        <title>Genome sequence of an obligate intracellular pathogen of humans: Chlamydia trachomatis.</title>
        <authorList>
            <person name="Stephens R.S."/>
            <person name="Kalman S."/>
            <person name="Lammel C.J."/>
            <person name="Fan J."/>
            <person name="Marathe R."/>
            <person name="Aravind L."/>
            <person name="Mitchell W.P."/>
            <person name="Olinger L."/>
            <person name="Tatusov R.L."/>
            <person name="Zhao Q."/>
            <person name="Koonin E.V."/>
            <person name="Davis R.W."/>
        </authorList>
    </citation>
    <scope>NUCLEOTIDE SEQUENCE [LARGE SCALE GENOMIC DNA]</scope>
    <source>
        <strain>ATCC VR-885 / DSM 19411 / UW-3/Cx</strain>
    </source>
</reference>
<keyword id="KW-0030">Aminoacyl-tRNA synthetase</keyword>
<keyword id="KW-0067">ATP-binding</keyword>
<keyword id="KW-0963">Cytoplasm</keyword>
<keyword id="KW-0436">Ligase</keyword>
<keyword id="KW-0460">Magnesium</keyword>
<keyword id="KW-0479">Metal-binding</keyword>
<keyword id="KW-0547">Nucleotide-binding</keyword>
<keyword id="KW-0648">Protein biosynthesis</keyword>
<keyword id="KW-1185">Reference proteome</keyword>
<keyword id="KW-0694">RNA-binding</keyword>
<keyword id="KW-0820">tRNA-binding</keyword>